<comment type="similarity">
    <text evidence="1">Belongs to the UPF0102 family.</text>
</comment>
<accession>A5CQR8</accession>
<organism>
    <name type="scientific">Clavibacter michiganensis subsp. michiganensis (strain NCPPB 382)</name>
    <dbReference type="NCBI Taxonomy" id="443906"/>
    <lineage>
        <taxon>Bacteria</taxon>
        <taxon>Bacillati</taxon>
        <taxon>Actinomycetota</taxon>
        <taxon>Actinomycetes</taxon>
        <taxon>Micrococcales</taxon>
        <taxon>Microbacteriaceae</taxon>
        <taxon>Clavibacter</taxon>
    </lineage>
</organism>
<evidence type="ECO:0000255" key="1">
    <source>
        <dbReference type="HAMAP-Rule" id="MF_00048"/>
    </source>
</evidence>
<feature type="chain" id="PRO_1000009201" description="UPF0102 protein CMM_1377">
    <location>
        <begin position="1"/>
        <end position="118"/>
    </location>
</feature>
<protein>
    <recommendedName>
        <fullName evidence="1">UPF0102 protein CMM_1377</fullName>
    </recommendedName>
</protein>
<sequence>MTREQDLGRRGEEIAAQHLIGRGYTLVERNWRCREGEIDLVMTHAGTTVLVEVKTRAGLGYGHPLEAVTRAKASRLRVLAGLWCQAHPDRRGPVRIDVVGVLWPRGGQPSVEVVRSAC</sequence>
<name>Y1377_CLAM3</name>
<reference key="1">
    <citation type="journal article" date="2008" name="J. Bacteriol.">
        <title>The genome sequence of the tomato-pathogenic actinomycete Clavibacter michiganensis subsp. michiganensis NCPPB382 reveals a large island involved in pathogenicity.</title>
        <authorList>
            <person name="Gartemann K.-H."/>
            <person name="Abt B."/>
            <person name="Bekel T."/>
            <person name="Burger A."/>
            <person name="Engemann J."/>
            <person name="Fluegel M."/>
            <person name="Gaigalat L."/>
            <person name="Goesmann A."/>
            <person name="Graefen I."/>
            <person name="Kalinowski J."/>
            <person name="Kaup O."/>
            <person name="Kirchner O."/>
            <person name="Krause L."/>
            <person name="Linke B."/>
            <person name="McHardy A."/>
            <person name="Meyer F."/>
            <person name="Pohle S."/>
            <person name="Rueckert C."/>
            <person name="Schneiker S."/>
            <person name="Zellermann E.-M."/>
            <person name="Puehler A."/>
            <person name="Eichenlaub R."/>
            <person name="Kaiser O."/>
            <person name="Bartels D."/>
        </authorList>
    </citation>
    <scope>NUCLEOTIDE SEQUENCE [LARGE SCALE GENOMIC DNA]</scope>
    <source>
        <strain>NCPPB 382</strain>
    </source>
</reference>
<dbReference type="EMBL" id="AM711867">
    <property type="protein sequence ID" value="CAN01422.1"/>
    <property type="molecule type" value="Genomic_DNA"/>
</dbReference>
<dbReference type="RefSeq" id="WP_012038063.1">
    <property type="nucleotide sequence ID" value="NC_009480.1"/>
</dbReference>
<dbReference type="SMR" id="A5CQR8"/>
<dbReference type="GeneID" id="92947348"/>
<dbReference type="KEGG" id="cmi:CMM_1377"/>
<dbReference type="eggNOG" id="COG0792">
    <property type="taxonomic scope" value="Bacteria"/>
</dbReference>
<dbReference type="HOGENOM" id="CLU_115353_2_3_11"/>
<dbReference type="OrthoDB" id="9794876at2"/>
<dbReference type="Proteomes" id="UP000001564">
    <property type="component" value="Chromosome"/>
</dbReference>
<dbReference type="GO" id="GO:0003676">
    <property type="term" value="F:nucleic acid binding"/>
    <property type="evidence" value="ECO:0007669"/>
    <property type="project" value="InterPro"/>
</dbReference>
<dbReference type="CDD" id="cd20736">
    <property type="entry name" value="PoNe_Nuclease"/>
    <property type="match status" value="1"/>
</dbReference>
<dbReference type="Gene3D" id="3.40.1350.10">
    <property type="match status" value="1"/>
</dbReference>
<dbReference type="HAMAP" id="MF_00048">
    <property type="entry name" value="UPF0102"/>
    <property type="match status" value="1"/>
</dbReference>
<dbReference type="InterPro" id="IPR011335">
    <property type="entry name" value="Restrct_endonuc-II-like"/>
</dbReference>
<dbReference type="InterPro" id="IPR011856">
    <property type="entry name" value="tRNA_endonuc-like_dom_sf"/>
</dbReference>
<dbReference type="InterPro" id="IPR003509">
    <property type="entry name" value="UPF0102_YraN-like"/>
</dbReference>
<dbReference type="NCBIfam" id="NF009150">
    <property type="entry name" value="PRK12497.1-3"/>
    <property type="match status" value="1"/>
</dbReference>
<dbReference type="NCBIfam" id="NF009154">
    <property type="entry name" value="PRK12497.3-3"/>
    <property type="match status" value="1"/>
</dbReference>
<dbReference type="PANTHER" id="PTHR34039">
    <property type="entry name" value="UPF0102 PROTEIN YRAN"/>
    <property type="match status" value="1"/>
</dbReference>
<dbReference type="PANTHER" id="PTHR34039:SF1">
    <property type="entry name" value="UPF0102 PROTEIN YRAN"/>
    <property type="match status" value="1"/>
</dbReference>
<dbReference type="Pfam" id="PF02021">
    <property type="entry name" value="UPF0102"/>
    <property type="match status" value="1"/>
</dbReference>
<dbReference type="SUPFAM" id="SSF52980">
    <property type="entry name" value="Restriction endonuclease-like"/>
    <property type="match status" value="1"/>
</dbReference>
<gene>
    <name type="ordered locus">CMM_1377</name>
</gene>
<proteinExistence type="inferred from homology"/>